<dbReference type="EC" id="1.1.1.25" evidence="1"/>
<dbReference type="EMBL" id="AM942759">
    <property type="protein sequence ID" value="CAR46455.1"/>
    <property type="molecule type" value="Genomic_DNA"/>
</dbReference>
<dbReference type="RefSeq" id="WP_004249684.1">
    <property type="nucleotide sequence ID" value="NC_010554.1"/>
</dbReference>
<dbReference type="SMR" id="B4F1M1"/>
<dbReference type="EnsemblBacteria" id="CAR46455">
    <property type="protein sequence ID" value="CAR46455"/>
    <property type="gene ID" value="PMI3292"/>
</dbReference>
<dbReference type="GeneID" id="6802396"/>
<dbReference type="KEGG" id="pmr:PMI3292"/>
<dbReference type="eggNOG" id="COG0169">
    <property type="taxonomic scope" value="Bacteria"/>
</dbReference>
<dbReference type="HOGENOM" id="CLU_044063_2_1_6"/>
<dbReference type="UniPathway" id="UPA00053">
    <property type="reaction ID" value="UER00087"/>
</dbReference>
<dbReference type="Proteomes" id="UP000008319">
    <property type="component" value="Chromosome"/>
</dbReference>
<dbReference type="GO" id="GO:0005829">
    <property type="term" value="C:cytosol"/>
    <property type="evidence" value="ECO:0007669"/>
    <property type="project" value="TreeGrafter"/>
</dbReference>
<dbReference type="GO" id="GO:0050661">
    <property type="term" value="F:NADP binding"/>
    <property type="evidence" value="ECO:0007669"/>
    <property type="project" value="InterPro"/>
</dbReference>
<dbReference type="GO" id="GO:0004764">
    <property type="term" value="F:shikimate 3-dehydrogenase (NADP+) activity"/>
    <property type="evidence" value="ECO:0007669"/>
    <property type="project" value="UniProtKB-UniRule"/>
</dbReference>
<dbReference type="GO" id="GO:0008652">
    <property type="term" value="P:amino acid biosynthetic process"/>
    <property type="evidence" value="ECO:0007669"/>
    <property type="project" value="UniProtKB-KW"/>
</dbReference>
<dbReference type="GO" id="GO:0009073">
    <property type="term" value="P:aromatic amino acid family biosynthetic process"/>
    <property type="evidence" value="ECO:0007669"/>
    <property type="project" value="UniProtKB-KW"/>
</dbReference>
<dbReference type="GO" id="GO:0009423">
    <property type="term" value="P:chorismate biosynthetic process"/>
    <property type="evidence" value="ECO:0007669"/>
    <property type="project" value="UniProtKB-UniRule"/>
</dbReference>
<dbReference type="GO" id="GO:0019632">
    <property type="term" value="P:shikimate metabolic process"/>
    <property type="evidence" value="ECO:0007669"/>
    <property type="project" value="InterPro"/>
</dbReference>
<dbReference type="CDD" id="cd01065">
    <property type="entry name" value="NAD_bind_Shikimate_DH"/>
    <property type="match status" value="1"/>
</dbReference>
<dbReference type="FunFam" id="3.40.50.10860:FF:000006">
    <property type="entry name" value="Shikimate dehydrogenase (NADP(+))"/>
    <property type="match status" value="1"/>
</dbReference>
<dbReference type="FunFam" id="3.40.50.720:FF:000104">
    <property type="entry name" value="Shikimate dehydrogenase (NADP(+))"/>
    <property type="match status" value="1"/>
</dbReference>
<dbReference type="Gene3D" id="3.40.50.10860">
    <property type="entry name" value="Leucine Dehydrogenase, chain A, domain 1"/>
    <property type="match status" value="1"/>
</dbReference>
<dbReference type="Gene3D" id="3.40.50.720">
    <property type="entry name" value="NAD(P)-binding Rossmann-like Domain"/>
    <property type="match status" value="1"/>
</dbReference>
<dbReference type="HAMAP" id="MF_00222">
    <property type="entry name" value="Shikimate_DH_AroE"/>
    <property type="match status" value="1"/>
</dbReference>
<dbReference type="InterPro" id="IPR046346">
    <property type="entry name" value="Aminoacid_DH-like_N_sf"/>
</dbReference>
<dbReference type="InterPro" id="IPR036291">
    <property type="entry name" value="NAD(P)-bd_dom_sf"/>
</dbReference>
<dbReference type="InterPro" id="IPR041121">
    <property type="entry name" value="SDH_C"/>
</dbReference>
<dbReference type="InterPro" id="IPR011342">
    <property type="entry name" value="Shikimate_DH"/>
</dbReference>
<dbReference type="InterPro" id="IPR013708">
    <property type="entry name" value="Shikimate_DH-bd_N"/>
</dbReference>
<dbReference type="InterPro" id="IPR022893">
    <property type="entry name" value="Shikimate_DH_fam"/>
</dbReference>
<dbReference type="InterPro" id="IPR006151">
    <property type="entry name" value="Shikm_DH/Glu-tRNA_Rdtase"/>
</dbReference>
<dbReference type="NCBIfam" id="TIGR00507">
    <property type="entry name" value="aroE"/>
    <property type="match status" value="1"/>
</dbReference>
<dbReference type="NCBIfam" id="NF001310">
    <property type="entry name" value="PRK00258.1-2"/>
    <property type="match status" value="1"/>
</dbReference>
<dbReference type="PANTHER" id="PTHR21089:SF1">
    <property type="entry name" value="BIFUNCTIONAL 3-DEHYDROQUINATE DEHYDRATASE_SHIKIMATE DEHYDROGENASE, CHLOROPLASTIC"/>
    <property type="match status" value="1"/>
</dbReference>
<dbReference type="PANTHER" id="PTHR21089">
    <property type="entry name" value="SHIKIMATE DEHYDROGENASE"/>
    <property type="match status" value="1"/>
</dbReference>
<dbReference type="Pfam" id="PF18317">
    <property type="entry name" value="SDH_C"/>
    <property type="match status" value="1"/>
</dbReference>
<dbReference type="Pfam" id="PF01488">
    <property type="entry name" value="Shikimate_DH"/>
    <property type="match status" value="1"/>
</dbReference>
<dbReference type="Pfam" id="PF08501">
    <property type="entry name" value="Shikimate_dh_N"/>
    <property type="match status" value="1"/>
</dbReference>
<dbReference type="SUPFAM" id="SSF53223">
    <property type="entry name" value="Aminoacid dehydrogenase-like, N-terminal domain"/>
    <property type="match status" value="1"/>
</dbReference>
<dbReference type="SUPFAM" id="SSF51735">
    <property type="entry name" value="NAD(P)-binding Rossmann-fold domains"/>
    <property type="match status" value="1"/>
</dbReference>
<sequence>MEKYVVMGNPIEHSQSPFIHQLFSKQSGIDYEYGRLLVPLGEFDKVATQFFSQGGRGANVTVPFKEDAFRFVDKLTQRAQACGAVNTILKLDDGTLLGDNTDGQGLILDLARLDFIIPGKILSVLVIGAGGATRGILLPLLNYNCDITLTNRTVEKAQQLAQEFSQFGTIRASAPQNVTDKHYDLIINASSSSMTDDIPPIPDSAYGFKTACYDLYYKAGMTSFLYHALKNGSTRLSDGLGMLVGQAAYAVELWYERVPDINPTINILRENLNK</sequence>
<comment type="function">
    <text evidence="1">Involved in the biosynthesis of the chorismate, which leads to the biosynthesis of aromatic amino acids. Catalyzes the reversible NADPH linked reduction of 3-dehydroshikimate (DHSA) to yield shikimate (SA).</text>
</comment>
<comment type="catalytic activity">
    <reaction evidence="1">
        <text>shikimate + NADP(+) = 3-dehydroshikimate + NADPH + H(+)</text>
        <dbReference type="Rhea" id="RHEA:17737"/>
        <dbReference type="ChEBI" id="CHEBI:15378"/>
        <dbReference type="ChEBI" id="CHEBI:16630"/>
        <dbReference type="ChEBI" id="CHEBI:36208"/>
        <dbReference type="ChEBI" id="CHEBI:57783"/>
        <dbReference type="ChEBI" id="CHEBI:58349"/>
        <dbReference type="EC" id="1.1.1.25"/>
    </reaction>
</comment>
<comment type="pathway">
    <text evidence="1">Metabolic intermediate biosynthesis; chorismate biosynthesis; chorismate from D-erythrose 4-phosphate and phosphoenolpyruvate: step 4/7.</text>
</comment>
<comment type="subunit">
    <text evidence="1">Homodimer.</text>
</comment>
<comment type="similarity">
    <text evidence="1">Belongs to the shikimate dehydrogenase family.</text>
</comment>
<proteinExistence type="inferred from homology"/>
<reference key="1">
    <citation type="journal article" date="2008" name="J. Bacteriol.">
        <title>Complete genome sequence of uropathogenic Proteus mirabilis, a master of both adherence and motility.</title>
        <authorList>
            <person name="Pearson M.M."/>
            <person name="Sebaihia M."/>
            <person name="Churcher C."/>
            <person name="Quail M.A."/>
            <person name="Seshasayee A.S."/>
            <person name="Luscombe N.M."/>
            <person name="Abdellah Z."/>
            <person name="Arrosmith C."/>
            <person name="Atkin B."/>
            <person name="Chillingworth T."/>
            <person name="Hauser H."/>
            <person name="Jagels K."/>
            <person name="Moule S."/>
            <person name="Mungall K."/>
            <person name="Norbertczak H."/>
            <person name="Rabbinowitsch E."/>
            <person name="Walker D."/>
            <person name="Whithead S."/>
            <person name="Thomson N.R."/>
            <person name="Rather P.N."/>
            <person name="Parkhill J."/>
            <person name="Mobley H.L.T."/>
        </authorList>
    </citation>
    <scope>NUCLEOTIDE SEQUENCE [LARGE SCALE GENOMIC DNA]</scope>
    <source>
        <strain>HI4320</strain>
    </source>
</reference>
<keyword id="KW-0028">Amino-acid biosynthesis</keyword>
<keyword id="KW-0057">Aromatic amino acid biosynthesis</keyword>
<keyword id="KW-0521">NADP</keyword>
<keyword id="KW-0560">Oxidoreductase</keyword>
<keyword id="KW-1185">Reference proteome</keyword>
<feature type="chain" id="PRO_1000100131" description="Shikimate dehydrogenase (NADP(+))">
    <location>
        <begin position="1"/>
        <end position="274"/>
    </location>
</feature>
<feature type="active site" description="Proton acceptor" evidence="1">
    <location>
        <position position="65"/>
    </location>
</feature>
<feature type="binding site" evidence="1">
    <location>
        <begin position="14"/>
        <end position="16"/>
    </location>
    <ligand>
        <name>shikimate</name>
        <dbReference type="ChEBI" id="CHEBI:36208"/>
    </ligand>
</feature>
<feature type="binding site" evidence="1">
    <location>
        <position position="61"/>
    </location>
    <ligand>
        <name>shikimate</name>
        <dbReference type="ChEBI" id="CHEBI:36208"/>
    </ligand>
</feature>
<feature type="binding site" evidence="1">
    <location>
        <position position="86"/>
    </location>
    <ligand>
        <name>shikimate</name>
        <dbReference type="ChEBI" id="CHEBI:36208"/>
    </ligand>
</feature>
<feature type="binding site" evidence="1">
    <location>
        <position position="102"/>
    </location>
    <ligand>
        <name>shikimate</name>
        <dbReference type="ChEBI" id="CHEBI:36208"/>
    </ligand>
</feature>
<feature type="binding site" evidence="1">
    <location>
        <begin position="128"/>
        <end position="132"/>
    </location>
    <ligand>
        <name>NADP(+)</name>
        <dbReference type="ChEBI" id="CHEBI:58349"/>
    </ligand>
</feature>
<feature type="binding site" evidence="1">
    <location>
        <begin position="151"/>
        <end position="156"/>
    </location>
    <ligand>
        <name>NADP(+)</name>
        <dbReference type="ChEBI" id="CHEBI:58349"/>
    </ligand>
</feature>
<feature type="binding site" evidence="1">
    <location>
        <position position="215"/>
    </location>
    <ligand>
        <name>NADP(+)</name>
        <dbReference type="ChEBI" id="CHEBI:58349"/>
    </ligand>
</feature>
<feature type="binding site" evidence="1">
    <location>
        <position position="217"/>
    </location>
    <ligand>
        <name>shikimate</name>
        <dbReference type="ChEBI" id="CHEBI:36208"/>
    </ligand>
</feature>
<feature type="binding site" evidence="1">
    <location>
        <position position="239"/>
    </location>
    <ligand>
        <name>NADP(+)</name>
        <dbReference type="ChEBI" id="CHEBI:58349"/>
    </ligand>
</feature>
<gene>
    <name evidence="1" type="primary">aroE</name>
    <name type="ordered locus">PMI3292</name>
</gene>
<protein>
    <recommendedName>
        <fullName evidence="1">Shikimate dehydrogenase (NADP(+))</fullName>
        <shortName evidence="1">SDH</shortName>
        <ecNumber evidence="1">1.1.1.25</ecNumber>
    </recommendedName>
</protein>
<evidence type="ECO:0000255" key="1">
    <source>
        <dbReference type="HAMAP-Rule" id="MF_00222"/>
    </source>
</evidence>
<name>AROE_PROMH</name>
<organism>
    <name type="scientific">Proteus mirabilis (strain HI4320)</name>
    <dbReference type="NCBI Taxonomy" id="529507"/>
    <lineage>
        <taxon>Bacteria</taxon>
        <taxon>Pseudomonadati</taxon>
        <taxon>Pseudomonadota</taxon>
        <taxon>Gammaproteobacteria</taxon>
        <taxon>Enterobacterales</taxon>
        <taxon>Morganellaceae</taxon>
        <taxon>Proteus</taxon>
    </lineage>
</organism>
<accession>B4F1M1</accession>